<gene>
    <name evidence="14" type="primary">flp-11</name>
    <name evidence="14" type="ORF">K02G10.4</name>
</gene>
<evidence type="ECO:0000255" key="1"/>
<evidence type="ECO:0000256" key="2">
    <source>
        <dbReference type="SAM" id="MobiDB-lite"/>
    </source>
</evidence>
<evidence type="ECO:0000269" key="3">
    <source>
    </source>
</evidence>
<evidence type="ECO:0000269" key="4">
    <source>
    </source>
</evidence>
<evidence type="ECO:0000269" key="5">
    <source>
    </source>
</evidence>
<evidence type="ECO:0000269" key="6">
    <source>
    </source>
</evidence>
<evidence type="ECO:0000269" key="7">
    <source>
    </source>
</evidence>
<evidence type="ECO:0000269" key="8">
    <source>
    </source>
</evidence>
<evidence type="ECO:0000269" key="9">
    <source>
    </source>
</evidence>
<evidence type="ECO:0000269" key="10">
    <source>
    </source>
</evidence>
<evidence type="ECO:0000269" key="11">
    <source>
    </source>
</evidence>
<evidence type="ECO:0000305" key="12"/>
<evidence type="ECO:0000312" key="13">
    <source>
        <dbReference type="EMBL" id="AAC08948.1"/>
    </source>
</evidence>
<evidence type="ECO:0000312" key="14">
    <source>
        <dbReference type="WormBase" id="K02G10.4a"/>
    </source>
</evidence>
<evidence type="ECO:0000312" key="15">
    <source>
        <dbReference type="WormBase" id="K02G10.4b"/>
    </source>
</evidence>
<evidence type="ECO:0000312" key="16">
    <source>
        <dbReference type="WormBase" id="K02G10.4c"/>
    </source>
</evidence>
<dbReference type="EMBL" id="AF042397">
    <property type="protein sequence ID" value="AAC08948.1"/>
    <property type="molecule type" value="mRNA"/>
</dbReference>
<dbReference type="EMBL" id="AF042398">
    <property type="protein sequence ID" value="AAC08949.1"/>
    <property type="molecule type" value="mRNA"/>
</dbReference>
<dbReference type="EMBL" id="BX284606">
    <property type="protein sequence ID" value="CCD68560.1"/>
    <property type="molecule type" value="Genomic_DNA"/>
</dbReference>
<dbReference type="EMBL" id="BX284606">
    <property type="protein sequence ID" value="CCD68561.1"/>
    <property type="molecule type" value="Genomic_DNA"/>
</dbReference>
<dbReference type="EMBL" id="BX284606">
    <property type="protein sequence ID" value="CCD68562.1"/>
    <property type="molecule type" value="Genomic_DNA"/>
</dbReference>
<dbReference type="PIR" id="T16537">
    <property type="entry name" value="T16537"/>
</dbReference>
<dbReference type="RefSeq" id="NP_001024752.1">
    <molecule id="Q21156-1"/>
    <property type="nucleotide sequence ID" value="NM_001029581.9"/>
</dbReference>
<dbReference type="RefSeq" id="NP_001024753.1">
    <molecule id="Q21156-2"/>
    <property type="nucleotide sequence ID" value="NM_001029582.4"/>
</dbReference>
<dbReference type="RefSeq" id="NP_001024754.1">
    <molecule id="Q21156-3"/>
    <property type="nucleotide sequence ID" value="NM_001029583.4"/>
</dbReference>
<dbReference type="BioGRID" id="45676">
    <property type="interactions" value="6"/>
</dbReference>
<dbReference type="DIP" id="DIP-25649N"/>
<dbReference type="FunCoup" id="Q21156">
    <property type="interactions" value="1379"/>
</dbReference>
<dbReference type="STRING" id="6239.K02G10.4a.1"/>
<dbReference type="PaxDb" id="6239-K02G10.4a"/>
<dbReference type="EnsemblMetazoa" id="K02G10.4a.1">
    <molecule id="Q21156-1"/>
    <property type="protein sequence ID" value="K02G10.4a.1"/>
    <property type="gene ID" value="WBGene00001454"/>
</dbReference>
<dbReference type="EnsemblMetazoa" id="K02G10.4b.1">
    <molecule id="Q21156-2"/>
    <property type="protein sequence ID" value="K02G10.4b.1"/>
    <property type="gene ID" value="WBGene00001454"/>
</dbReference>
<dbReference type="EnsemblMetazoa" id="K02G10.4c.1">
    <molecule id="Q21156-3"/>
    <property type="protein sequence ID" value="K02G10.4c.1"/>
    <property type="gene ID" value="WBGene00001454"/>
</dbReference>
<dbReference type="GeneID" id="180741"/>
<dbReference type="KEGG" id="cel:CELE_K02G10.4"/>
<dbReference type="UCSC" id="K02G10.4c">
    <molecule id="Q21156-1"/>
    <property type="organism name" value="c. elegans"/>
</dbReference>
<dbReference type="AGR" id="WB:WBGene00001454"/>
<dbReference type="CTD" id="180741"/>
<dbReference type="WormBase" id="K02G10.4a">
    <molecule id="Q21156-1"/>
    <property type="protein sequence ID" value="CE04704"/>
    <property type="gene ID" value="WBGene00001454"/>
    <property type="gene designation" value="flp-11"/>
</dbReference>
<dbReference type="WormBase" id="K02G10.4b">
    <molecule id="Q21156-2"/>
    <property type="protein sequence ID" value="CE31030"/>
    <property type="gene ID" value="WBGene00001454"/>
    <property type="gene designation" value="flp-11"/>
</dbReference>
<dbReference type="WormBase" id="K02G10.4c">
    <molecule id="Q21156-3"/>
    <property type="protein sequence ID" value="CE34328"/>
    <property type="gene ID" value="WBGene00001454"/>
    <property type="gene designation" value="flp-11"/>
</dbReference>
<dbReference type="eggNOG" id="ENOG502SXW2">
    <property type="taxonomic scope" value="Eukaryota"/>
</dbReference>
<dbReference type="HOGENOM" id="CLU_173525_0_0_1"/>
<dbReference type="InParanoid" id="Q21156"/>
<dbReference type="OMA" id="LDHMHDI"/>
<dbReference type="OrthoDB" id="5847731at2759"/>
<dbReference type="PRO" id="PR:Q21156"/>
<dbReference type="Proteomes" id="UP000001940">
    <property type="component" value="Chromosome X"/>
</dbReference>
<dbReference type="Bgee" id="WBGene00001454">
    <property type="expression patterns" value="Expressed in larva and 3 other cell types or tissues"/>
</dbReference>
<dbReference type="GO" id="GO:0005576">
    <property type="term" value="C:extracellular region"/>
    <property type="evidence" value="ECO:0000305"/>
    <property type="project" value="WormBase"/>
</dbReference>
<dbReference type="GO" id="GO:0071855">
    <property type="term" value="F:neuropeptide receptor binding"/>
    <property type="evidence" value="ECO:0000314"/>
    <property type="project" value="WormBase"/>
</dbReference>
<dbReference type="GO" id="GO:0007218">
    <property type="term" value="P:neuropeptide signaling pathway"/>
    <property type="evidence" value="ECO:0000314"/>
    <property type="project" value="WormBase"/>
</dbReference>
<dbReference type="GO" id="GO:0030431">
    <property type="term" value="P:sleep"/>
    <property type="evidence" value="ECO:0000315"/>
    <property type="project" value="WormBase"/>
</dbReference>
<reference evidence="12 13" key="1">
    <citation type="journal article" date="1998" name="Brain Res. Mol. Brain Res.">
        <title>FMRFamide-related gene family in the nematode, Caenorhabditis elegans.</title>
        <authorList>
            <person name="Nelson L.S."/>
            <person name="Kim K."/>
            <person name="Memmott J.E."/>
            <person name="Li C."/>
        </authorList>
    </citation>
    <scope>NUCLEOTIDE SEQUENCE [MRNA] (ISOFORMS A AND B)</scope>
    <scope>ALTERNATIVE SPLICING</scope>
    <scope>DEVELOPMENTAL STAGE</scope>
    <source>
        <strain evidence="13">Bristol N2</strain>
    </source>
</reference>
<reference key="2">
    <citation type="journal article" date="1998" name="Science">
        <title>Genome sequence of the nematode C. elegans: a platform for investigating biology.</title>
        <authorList>
            <consortium name="The C. elegans sequencing consortium"/>
        </authorList>
    </citation>
    <scope>NUCLEOTIDE SEQUENCE [LARGE SCALE GENOMIC DNA]</scope>
    <source>
        <strain>Bristol N2</strain>
    </source>
</reference>
<reference evidence="12" key="3">
    <citation type="journal article" date="2005" name="Biochem. Biophys. Res. Commun.">
        <title>Discovering neuropeptides in Caenorhabditis elegans by two dimensional liquid chromatography and mass spectrometry.</title>
        <authorList>
            <person name="Husson S.J."/>
            <person name="Clynen E."/>
            <person name="Baggerman G."/>
            <person name="De Loof A."/>
            <person name="Schoofs L."/>
        </authorList>
    </citation>
    <scope>PROTEIN SEQUENCE OF 43-54; 58-72 AND 76-85</scope>
    <scope>AMIDATION AT PHE-54; GLN-72 AND PHE-85</scope>
    <source>
        <strain evidence="4">Bristol N2</strain>
    </source>
</reference>
<reference evidence="12" key="4">
    <citation type="journal article" date="2004" name="J. Comp. Neurol.">
        <title>Expression and regulation of an FMRFamide-related neuropeptide gene family in Caenorhabditis elegans.</title>
        <authorList>
            <person name="Kim K."/>
            <person name="Li C."/>
        </authorList>
    </citation>
    <scope>TISSUE SPECIFICITY</scope>
    <scope>DEVELOPMENTAL STAGE</scope>
</reference>
<reference evidence="12" key="5">
    <citation type="journal article" date="2005" name="J. Neurobiol.">
        <title>Role of a FMRFamide-like family of neuropeptides in the pharyngeal nervous system of Caenorhabditis elegans.</title>
        <authorList>
            <person name="Papaioannou S."/>
            <person name="Marsden D."/>
            <person name="Franks C.J."/>
            <person name="Walker R.J."/>
            <person name="Holden-Dye L."/>
        </authorList>
    </citation>
    <scope>FUNCTION</scope>
</reference>
<reference key="6">
    <citation type="journal article" date="2006" name="Peptides">
        <title>FMRFamide related peptide ligands activate the Caenorhabditis elegans orphan GPCR Y59H11AL.1.</title>
        <authorList>
            <person name="Mertens I."/>
            <person name="Clinckspoor I."/>
            <person name="Janssen T."/>
            <person name="Nachman R."/>
            <person name="Schoofs L."/>
        </authorList>
    </citation>
    <scope>FUNCTION (AMRNALVRF-AMIDE; ASGGMRNALVRF-AMIDE AND NGAPQPFVRF-AMIDE)</scope>
</reference>
<reference evidence="12" key="7">
    <citation type="journal article" date="2016" name="Elife">
        <title>Sleep-active neuron specification and sleep induction require FLP-11 neuropeptides to systemically induce sleep.</title>
        <authorList>
            <person name="Turek M."/>
            <person name="Besseling J."/>
            <person name="Spies J.P."/>
            <person name="Koenig S."/>
            <person name="Bringmann H."/>
        </authorList>
    </citation>
    <scope>FUNCTION</scope>
    <scope>TISSUE SPECIFICITY</scope>
    <scope>DEVELOPMENTAL STAGE</scope>
    <scope>DISRUPTION PHENOTYPE</scope>
</reference>
<reference key="8">
    <citation type="journal article" date="2017" name="Curr. Biol.">
        <title>Sexually Dimorphic Differentiation of a C. elegans Hub Neuron Is Cell Autonomously Controlled by a Conserved Transcription Factor.</title>
        <authorList>
            <person name="Serrano-Saiz E."/>
            <person name="Oren-Suissa M."/>
            <person name="Bayer E.A."/>
            <person name="Hobert O."/>
        </authorList>
    </citation>
    <scope>TISSUE SPECIFICITY</scope>
    <scope>DEVELOPMENTAL STAGE</scope>
</reference>
<reference evidence="12" key="9">
    <citation type="journal article" date="2019" name="Nat. Commun.">
        <title>A GABAergic and peptidergic sleep neuron as a locomotion stop neuron with compartmentalized Ca2+ dynamics.</title>
        <authorList>
            <person name="Steuer Costa W."/>
            <person name="Van der Auwera P."/>
            <person name="Glock C."/>
            <person name="Liewald J.F."/>
            <person name="Bach M."/>
            <person name="Schueler C."/>
            <person name="Wabnig S."/>
            <person name="Oranth A."/>
            <person name="Masurat F."/>
            <person name="Bringmann H."/>
            <person name="Schoofs L."/>
            <person name="Stelzer E.H.K."/>
            <person name="Fischer S.C."/>
            <person name="Gottschalk A."/>
        </authorList>
    </citation>
    <scope>FUNCTION</scope>
    <scope>TISSUE SPECIFICITY</scope>
    <scope>DISRUPTION PHENOTYPE</scope>
</reference>
<reference evidence="12" key="10">
    <citation type="journal article" date="2021" name="IScience">
        <title>Dopamine receptor DOP-1 engages a sleep pathway to modulate swimming in C. elegans.</title>
        <authorList>
            <person name="Xu Y."/>
            <person name="Zhang L."/>
            <person name="Liu Y."/>
            <person name="Topalidou I."/>
            <person name="Hassinan C."/>
            <person name="Ailion M."/>
            <person name="Zhao Z."/>
            <person name="Wang T."/>
            <person name="Chen Z."/>
            <person name="Bai J."/>
        </authorList>
    </citation>
    <scope>FUNCTION</scope>
    <scope>TISSUE SPECIFICITY</scope>
    <scope>DISRUPTION PHENOTYPE</scope>
</reference>
<accession>Q21156</accession>
<accession>O61467</accession>
<accession>Q7Z140</accession>
<keyword id="KW-0025">Alternative splicing</keyword>
<keyword id="KW-0027">Amidation</keyword>
<keyword id="KW-0165">Cleavage on pair of basic residues</keyword>
<keyword id="KW-0903">Direct protein sequencing</keyword>
<keyword id="KW-0527">Neuropeptide</keyword>
<keyword id="KW-1185">Reference proteome</keyword>
<keyword id="KW-0964">Secreted</keyword>
<keyword id="KW-0732">Signal</keyword>
<organism>
    <name type="scientific">Caenorhabditis elegans</name>
    <dbReference type="NCBI Taxonomy" id="6239"/>
    <lineage>
        <taxon>Eukaryota</taxon>
        <taxon>Metazoa</taxon>
        <taxon>Ecdysozoa</taxon>
        <taxon>Nematoda</taxon>
        <taxon>Chromadorea</taxon>
        <taxon>Rhabditida</taxon>
        <taxon>Rhabditina</taxon>
        <taxon>Rhabditomorpha</taxon>
        <taxon>Rhabditoidea</taxon>
        <taxon>Rhabditidae</taxon>
        <taxon>Peloderinae</taxon>
        <taxon>Caenorhabditis</taxon>
    </lineage>
</organism>
<comment type="function">
    <text evidence="7 9 10 12">FMRFamides and FMRFamide-like peptides are neuropeptides. Induces sleep-like quiescence behavior following release from RIS interneuron (PubMed:26949257, PubMed:33796839). Helps to sustain locomotion stop after gamma-aminobutyric acid (GABA) induces fast slowing response (PubMed:31506439). Inhibits the late-stage body bend swimming frequency in animals through several receptors including frpr-3, npr-4 and npr-22 (PubMed:33796839).</text>
</comment>
<comment type="function">
    <molecule>AMRNALVRF-amide</molecule>
    <text evidence="5 6">Potent inhibitor of the activity of the dissected pharyngeal myogenic muscle system (PubMed:16187307). Acts as a ligand for the npr-22 receptor in vitro (PubMed:16377032).</text>
</comment>
<comment type="function">
    <molecule>ASGGMRNALVRF-amide</molecule>
    <text evidence="6">Acts as a ligand for the npr-22 receptor in vitro.</text>
</comment>
<comment type="function">
    <molecule>NGAPQPFVRF-amide</molecule>
    <text evidence="6">Acts as a ligand for the npr-22 receptor in vitro.</text>
</comment>
<comment type="subcellular location">
    <subcellularLocation>
        <location evidence="12">Secreted</location>
    </subcellularLocation>
</comment>
<comment type="alternative products">
    <event type="alternative splicing"/>
    <isoform>
        <id>Q21156-1</id>
        <name evidence="14">a</name>
        <sequence type="displayed"/>
    </isoform>
    <isoform>
        <id>Q21156-2</id>
        <name evidence="15">b</name>
        <sequence type="described" ref="VSP_052619"/>
    </isoform>
    <isoform>
        <id>Q21156-3</id>
        <name evidence="16">c</name>
        <sequence type="described" ref="VSP_052620 VSP_052621"/>
    </isoform>
</comment>
<comment type="tissue specificity">
    <text evidence="3 7 8 9 10">Each flp gene is expressed in a distinct set of neurons (PubMed:15236235). Flp-11 is expressed in the DD, VD and DVB motor neurons, the PVC and URX interneurons, and the AUA, BAG, DA, LUA, and SAB neurons (PubMed:15236235). Also expressed in head muscle, socket or sheath cells and uterine cells (PubMed:15236235). Expressed exclusively in PHC sensory neurons in males (PubMed:15236235, PubMed:28065609). Expressed in AVK and RIS interneurons (PubMed:26949257, PubMed:31506439, PubMed:33796839).</text>
</comment>
<comment type="developmental stage">
    <text evidence="7 8 11">Expressed from the comma stage of embryogenesis, during all larval stages, and in adults (PubMed:9685599). In males, highly expressed in PHC sensory neurons during the L4 larval stage (PubMed:28065609). Expressed in Pretzel-stage embryos and during all larval stages in RIS neurons (PubMed:26949257).</text>
</comment>
<comment type="disruption phenotype">
    <text evidence="7 9 10">Does not affect the body bend swimming frequency of animals (PubMed:33796839). Exhibits normal pre-molting cessation of pumping (PubMed:26949257). Larval locomotion quiescence reduced significantly and nose immobility reduced to 14% from 48% in wild-type animals (PubMed:26949257). Photoactivation of apft-1 increases nose speed during quiescence in contrast to wild-type animals, which significantly reduce mobility (PubMed:26949257). Shows higher RIS activation at the onset of sleep (PubMed:26949257). Shows diminished RIS-induced body elongation, briefer slowing response and transient stop at the onset of RIS activation (PubMed:31506439). Reverses more immediately after RIS stimulus onset (PubMed:31506439). Does not inhibit pharyngeal pumping during RIS activation (PubMed:31506439). Exhibits abnormal correlation between Ca2+ signal and locomotion, especially in slowing response (PubMed:31506439). Restores late-stage body bend swimming frequency in grk-2 background animals (PubMed:33796839).</text>
</comment>
<comment type="similarity">
    <text evidence="1">Belongs to the FARP (FMRFamide related peptide) family.</text>
</comment>
<feature type="signal peptide" evidence="1">
    <location>
        <begin position="1"/>
        <end position="22"/>
    </location>
</feature>
<feature type="propeptide" id="PRO_0000312064" evidence="1">
    <location>
        <begin position="23"/>
        <end position="29"/>
    </location>
</feature>
<feature type="peptide" id="PRO_0000312065" description="AMRNALVRF-amide" evidence="1">
    <location>
        <begin position="32"/>
        <end position="40"/>
    </location>
</feature>
<feature type="peptide" id="PRO_0000312066" description="ASGGMRNALVRF-amide" evidence="4">
    <location>
        <begin position="43"/>
        <end position="54"/>
    </location>
</feature>
<feature type="peptide" id="PRO_0000312067" description="SPLDEEDFAPESPLQ-amide" evidence="4">
    <location>
        <begin position="58"/>
        <end position="72"/>
    </location>
</feature>
<feature type="peptide" id="PRO_0000312068" description="NGAPQPFVRF-amide" evidence="4">
    <location>
        <begin position="76"/>
        <end position="85"/>
    </location>
</feature>
<feature type="propeptide" id="PRO_0000312069" evidence="1">
    <location>
        <begin position="88"/>
        <end position="110"/>
    </location>
</feature>
<feature type="region of interest" description="Disordered" evidence="2">
    <location>
        <begin position="60"/>
        <end position="85"/>
    </location>
</feature>
<feature type="modified residue" description="Phenylalanine amide" evidence="1">
    <location>
        <position position="40"/>
    </location>
</feature>
<feature type="modified residue" description="Phenylalanine amide" evidence="4">
    <location>
        <position position="54"/>
    </location>
</feature>
<feature type="modified residue" description="Glutamine amide" evidence="4">
    <location>
        <position position="72"/>
    </location>
</feature>
<feature type="modified residue" description="Phenylalanine amide" evidence="4">
    <location>
        <position position="85"/>
    </location>
</feature>
<feature type="splice variant" id="VSP_052619" description="In isoform b." evidence="12">
    <original>VRFGRSGQLDHMHDLLSTLQKLKFANNK</original>
    <variation>EAQVRQQQVMTEDDRLLLEQLLRRIHH</variation>
    <location>
        <begin position="83"/>
        <end position="110"/>
    </location>
</feature>
<feature type="splice variant" id="VSP_052620" description="In isoform c." evidence="12">
    <original>VRFG</original>
    <variation>GKLS</variation>
    <location>
        <begin position="83"/>
        <end position="86"/>
    </location>
</feature>
<feature type="splice variant" id="VSP_052621" description="In isoform c." evidence="12">
    <location>
        <begin position="87"/>
        <end position="110"/>
    </location>
</feature>
<proteinExistence type="evidence at protein level"/>
<name>FLP11_CAEEL</name>
<protein>
    <recommendedName>
        <fullName>FMRFamide-like neuropeptides 11</fullName>
    </recommendedName>
    <component>
        <recommendedName>
            <fullName>AMRNALVRF-amide</fullName>
        </recommendedName>
    </component>
    <component>
        <recommendedName>
            <fullName>ASGGMRNALVRF-amide</fullName>
        </recommendedName>
    </component>
    <component>
        <recommendedName>
            <fullName>SPLDEEDFAPESPLQ-amide</fullName>
        </recommendedName>
    </component>
    <component>
        <recommendedName>
            <fullName>NGAPQPFVRF-amide</fullName>
        </recommendedName>
    </component>
</protein>
<sequence length="110" mass="12213">MTQFSALALLLIVFVAASFAQSYDDVSAEKRAMRNALVRFGRASGGMRNALVRFGKRSPLDEEDFAPESPLQGKRNGAPQPFVRFGRSGQLDHMHDLLSTLQKLKFANNK</sequence>